<dbReference type="EC" id="3.1.26.5" evidence="1"/>
<dbReference type="EMBL" id="CP000744">
    <property type="protein sequence ID" value="ABR83957.1"/>
    <property type="molecule type" value="Genomic_DNA"/>
</dbReference>
<dbReference type="RefSeq" id="WP_003151623.1">
    <property type="nucleotide sequence ID" value="NC_009656.1"/>
</dbReference>
<dbReference type="SMR" id="A6VF46"/>
<dbReference type="GeneID" id="77224121"/>
<dbReference type="KEGG" id="pap:PSPA7_6370"/>
<dbReference type="HOGENOM" id="CLU_117179_11_0_6"/>
<dbReference type="Proteomes" id="UP000001582">
    <property type="component" value="Chromosome"/>
</dbReference>
<dbReference type="GO" id="GO:0030677">
    <property type="term" value="C:ribonuclease P complex"/>
    <property type="evidence" value="ECO:0007669"/>
    <property type="project" value="TreeGrafter"/>
</dbReference>
<dbReference type="GO" id="GO:0042781">
    <property type="term" value="F:3'-tRNA processing endoribonuclease activity"/>
    <property type="evidence" value="ECO:0007669"/>
    <property type="project" value="TreeGrafter"/>
</dbReference>
<dbReference type="GO" id="GO:0004526">
    <property type="term" value="F:ribonuclease P activity"/>
    <property type="evidence" value="ECO:0007669"/>
    <property type="project" value="UniProtKB-UniRule"/>
</dbReference>
<dbReference type="GO" id="GO:0000049">
    <property type="term" value="F:tRNA binding"/>
    <property type="evidence" value="ECO:0007669"/>
    <property type="project" value="UniProtKB-UniRule"/>
</dbReference>
<dbReference type="GO" id="GO:0001682">
    <property type="term" value="P:tRNA 5'-leader removal"/>
    <property type="evidence" value="ECO:0007669"/>
    <property type="project" value="UniProtKB-UniRule"/>
</dbReference>
<dbReference type="Gene3D" id="3.30.230.10">
    <property type="match status" value="1"/>
</dbReference>
<dbReference type="HAMAP" id="MF_00227">
    <property type="entry name" value="RNase_P"/>
    <property type="match status" value="1"/>
</dbReference>
<dbReference type="InterPro" id="IPR020568">
    <property type="entry name" value="Ribosomal_Su5_D2-typ_SF"/>
</dbReference>
<dbReference type="InterPro" id="IPR014721">
    <property type="entry name" value="Ribsml_uS5_D2-typ_fold_subgr"/>
</dbReference>
<dbReference type="InterPro" id="IPR000100">
    <property type="entry name" value="RNase_P"/>
</dbReference>
<dbReference type="InterPro" id="IPR020539">
    <property type="entry name" value="RNase_P_CS"/>
</dbReference>
<dbReference type="NCBIfam" id="TIGR00188">
    <property type="entry name" value="rnpA"/>
    <property type="match status" value="1"/>
</dbReference>
<dbReference type="PANTHER" id="PTHR33992">
    <property type="entry name" value="RIBONUCLEASE P PROTEIN COMPONENT"/>
    <property type="match status" value="1"/>
</dbReference>
<dbReference type="PANTHER" id="PTHR33992:SF1">
    <property type="entry name" value="RIBONUCLEASE P PROTEIN COMPONENT"/>
    <property type="match status" value="1"/>
</dbReference>
<dbReference type="Pfam" id="PF00825">
    <property type="entry name" value="Ribonuclease_P"/>
    <property type="match status" value="1"/>
</dbReference>
<dbReference type="SUPFAM" id="SSF54211">
    <property type="entry name" value="Ribosomal protein S5 domain 2-like"/>
    <property type="match status" value="1"/>
</dbReference>
<dbReference type="PROSITE" id="PS00648">
    <property type="entry name" value="RIBONUCLEASE_P"/>
    <property type="match status" value="1"/>
</dbReference>
<reference key="1">
    <citation type="submission" date="2007-06" db="EMBL/GenBank/DDBJ databases">
        <authorList>
            <person name="Dodson R.J."/>
            <person name="Harkins D."/>
            <person name="Paulsen I.T."/>
        </authorList>
    </citation>
    <scope>NUCLEOTIDE SEQUENCE [LARGE SCALE GENOMIC DNA]</scope>
    <source>
        <strain>DSM 24068 / PA7</strain>
    </source>
</reference>
<gene>
    <name evidence="1" type="primary">rnpA</name>
    <name type="ordered locus">PSPA7_6370</name>
</gene>
<comment type="function">
    <text evidence="1">RNaseP catalyzes the removal of the 5'-leader sequence from pre-tRNA to produce the mature 5'-terminus. It can also cleave other RNA substrates such as 4.5S RNA. The protein component plays an auxiliary but essential role in vivo by binding to the 5'-leader sequence and broadening the substrate specificity of the ribozyme.</text>
</comment>
<comment type="catalytic activity">
    <reaction evidence="1">
        <text>Endonucleolytic cleavage of RNA, removing 5'-extranucleotides from tRNA precursor.</text>
        <dbReference type="EC" id="3.1.26.5"/>
    </reaction>
</comment>
<comment type="subunit">
    <text evidence="1">Consists of a catalytic RNA component (M1 or rnpB) and a protein subunit.</text>
</comment>
<comment type="similarity">
    <text evidence="1">Belongs to the RnpA family.</text>
</comment>
<keyword id="KW-0255">Endonuclease</keyword>
<keyword id="KW-0378">Hydrolase</keyword>
<keyword id="KW-0540">Nuclease</keyword>
<keyword id="KW-0694">RNA-binding</keyword>
<keyword id="KW-0819">tRNA processing</keyword>
<protein>
    <recommendedName>
        <fullName evidence="1">Ribonuclease P protein component</fullName>
        <shortName evidence="1">RNase P protein</shortName>
        <shortName evidence="1">RNaseP protein</shortName>
        <ecNumber evidence="1">3.1.26.5</ecNumber>
    </recommendedName>
    <alternativeName>
        <fullName evidence="1">Protein C5</fullName>
    </alternativeName>
</protein>
<feature type="chain" id="PRO_1000021444" description="Ribonuclease P protein component">
    <location>
        <begin position="1"/>
        <end position="135"/>
    </location>
</feature>
<evidence type="ECO:0000255" key="1">
    <source>
        <dbReference type="HAMAP-Rule" id="MF_00227"/>
    </source>
</evidence>
<sequence>MVSRDFDRDKRLLTARQFSAVFDSPTGKVPGKHVLLLARENGLDHPRLGLVIGKKNVKLAVQRNRLKRLIRESFRHNQEALAGWDIVMIARKGLGELENPELHQQFGKLWKRLLRNRPRTESPADAPGVADGTHA</sequence>
<accession>A6VF46</accession>
<proteinExistence type="inferred from homology"/>
<name>RNPA_PSEP7</name>
<organism>
    <name type="scientific">Pseudomonas paraeruginosa (strain DSM 24068 / PA7)</name>
    <name type="common">Pseudomonas aeruginosa (strain PA7)</name>
    <dbReference type="NCBI Taxonomy" id="381754"/>
    <lineage>
        <taxon>Bacteria</taxon>
        <taxon>Pseudomonadati</taxon>
        <taxon>Pseudomonadota</taxon>
        <taxon>Gammaproteobacteria</taxon>
        <taxon>Pseudomonadales</taxon>
        <taxon>Pseudomonadaceae</taxon>
        <taxon>Pseudomonas</taxon>
        <taxon>Pseudomonas paraeruginosa</taxon>
    </lineage>
</organism>